<accession>Q03Q17</accession>
<gene>
    <name evidence="1" type="primary">gatB</name>
    <name type="ordered locus">LVIS_1629</name>
</gene>
<reference key="1">
    <citation type="journal article" date="2006" name="Proc. Natl. Acad. Sci. U.S.A.">
        <title>Comparative genomics of the lactic acid bacteria.</title>
        <authorList>
            <person name="Makarova K.S."/>
            <person name="Slesarev A."/>
            <person name="Wolf Y.I."/>
            <person name="Sorokin A."/>
            <person name="Mirkin B."/>
            <person name="Koonin E.V."/>
            <person name="Pavlov A."/>
            <person name="Pavlova N."/>
            <person name="Karamychev V."/>
            <person name="Polouchine N."/>
            <person name="Shakhova V."/>
            <person name="Grigoriev I."/>
            <person name="Lou Y."/>
            <person name="Rohksar D."/>
            <person name="Lucas S."/>
            <person name="Huang K."/>
            <person name="Goodstein D.M."/>
            <person name="Hawkins T."/>
            <person name="Plengvidhya V."/>
            <person name="Welker D."/>
            <person name="Hughes J."/>
            <person name="Goh Y."/>
            <person name="Benson A."/>
            <person name="Baldwin K."/>
            <person name="Lee J.-H."/>
            <person name="Diaz-Muniz I."/>
            <person name="Dosti B."/>
            <person name="Smeianov V."/>
            <person name="Wechter W."/>
            <person name="Barabote R."/>
            <person name="Lorca G."/>
            <person name="Altermann E."/>
            <person name="Barrangou R."/>
            <person name="Ganesan B."/>
            <person name="Xie Y."/>
            <person name="Rawsthorne H."/>
            <person name="Tamir D."/>
            <person name="Parker C."/>
            <person name="Breidt F."/>
            <person name="Broadbent J.R."/>
            <person name="Hutkins R."/>
            <person name="O'Sullivan D."/>
            <person name="Steele J."/>
            <person name="Unlu G."/>
            <person name="Saier M.H. Jr."/>
            <person name="Klaenhammer T."/>
            <person name="Richardson P."/>
            <person name="Kozyavkin S."/>
            <person name="Weimer B.C."/>
            <person name="Mills D.A."/>
        </authorList>
    </citation>
    <scope>NUCLEOTIDE SEQUENCE [LARGE SCALE GENOMIC DNA]</scope>
    <source>
        <strain>ATCC 367 / BCRC 12310 / CIP 105137 / JCM 1170 / LMG 11437 / NCIMB 947 / NCTC 947</strain>
    </source>
</reference>
<name>GATB_LEVBA</name>
<organism>
    <name type="scientific">Levilactobacillus brevis (strain ATCC 367 / BCRC 12310 / CIP 105137 / JCM 1170 / LMG 11437 / NCIMB 947 / NCTC 947)</name>
    <name type="common">Lactobacillus brevis</name>
    <dbReference type="NCBI Taxonomy" id="387344"/>
    <lineage>
        <taxon>Bacteria</taxon>
        <taxon>Bacillati</taxon>
        <taxon>Bacillota</taxon>
        <taxon>Bacilli</taxon>
        <taxon>Lactobacillales</taxon>
        <taxon>Lactobacillaceae</taxon>
        <taxon>Levilactobacillus</taxon>
    </lineage>
</organism>
<proteinExistence type="inferred from homology"/>
<dbReference type="EC" id="6.3.5.-" evidence="1"/>
<dbReference type="EMBL" id="CP000416">
    <property type="protein sequence ID" value="ABJ64705.1"/>
    <property type="molecule type" value="Genomic_DNA"/>
</dbReference>
<dbReference type="RefSeq" id="WP_011668330.1">
    <property type="nucleotide sequence ID" value="NC_008497.1"/>
</dbReference>
<dbReference type="SMR" id="Q03Q17"/>
<dbReference type="STRING" id="387344.LVIS_1629"/>
<dbReference type="GeneID" id="56993475"/>
<dbReference type="KEGG" id="lbr:LVIS_1629"/>
<dbReference type="eggNOG" id="COG0064">
    <property type="taxonomic scope" value="Bacteria"/>
</dbReference>
<dbReference type="HOGENOM" id="CLU_019240_0_0_9"/>
<dbReference type="Proteomes" id="UP000001652">
    <property type="component" value="Chromosome"/>
</dbReference>
<dbReference type="GO" id="GO:0050566">
    <property type="term" value="F:asparaginyl-tRNA synthase (glutamine-hydrolyzing) activity"/>
    <property type="evidence" value="ECO:0007669"/>
    <property type="project" value="RHEA"/>
</dbReference>
<dbReference type="GO" id="GO:0005524">
    <property type="term" value="F:ATP binding"/>
    <property type="evidence" value="ECO:0007669"/>
    <property type="project" value="UniProtKB-KW"/>
</dbReference>
<dbReference type="GO" id="GO:0050567">
    <property type="term" value="F:glutaminyl-tRNA synthase (glutamine-hydrolyzing) activity"/>
    <property type="evidence" value="ECO:0007669"/>
    <property type="project" value="UniProtKB-UniRule"/>
</dbReference>
<dbReference type="GO" id="GO:0070681">
    <property type="term" value="P:glutaminyl-tRNAGln biosynthesis via transamidation"/>
    <property type="evidence" value="ECO:0007669"/>
    <property type="project" value="TreeGrafter"/>
</dbReference>
<dbReference type="GO" id="GO:0006412">
    <property type="term" value="P:translation"/>
    <property type="evidence" value="ECO:0007669"/>
    <property type="project" value="UniProtKB-UniRule"/>
</dbReference>
<dbReference type="FunFam" id="1.10.10.410:FF:000001">
    <property type="entry name" value="Aspartyl/glutamyl-tRNA(Asn/Gln) amidotransferase subunit B"/>
    <property type="match status" value="1"/>
</dbReference>
<dbReference type="FunFam" id="1.10.150.380:FF:000001">
    <property type="entry name" value="Aspartyl/glutamyl-tRNA(Asn/Gln) amidotransferase subunit B"/>
    <property type="match status" value="1"/>
</dbReference>
<dbReference type="Gene3D" id="1.10.10.410">
    <property type="match status" value="1"/>
</dbReference>
<dbReference type="Gene3D" id="1.10.150.380">
    <property type="entry name" value="GatB domain, N-terminal subdomain"/>
    <property type="match status" value="1"/>
</dbReference>
<dbReference type="HAMAP" id="MF_00121">
    <property type="entry name" value="GatB"/>
    <property type="match status" value="1"/>
</dbReference>
<dbReference type="InterPro" id="IPR017959">
    <property type="entry name" value="Asn/Gln-tRNA_amidoTrfase_suB/E"/>
</dbReference>
<dbReference type="InterPro" id="IPR006075">
    <property type="entry name" value="Asn/Gln-tRNA_Trfase_suB/E_cat"/>
</dbReference>
<dbReference type="InterPro" id="IPR018027">
    <property type="entry name" value="Asn/Gln_amidotransferase"/>
</dbReference>
<dbReference type="InterPro" id="IPR003789">
    <property type="entry name" value="Asn/Gln_tRNA_amidoTrase-B-like"/>
</dbReference>
<dbReference type="InterPro" id="IPR004413">
    <property type="entry name" value="GatB"/>
</dbReference>
<dbReference type="InterPro" id="IPR042114">
    <property type="entry name" value="GatB_C_1"/>
</dbReference>
<dbReference type="InterPro" id="IPR023168">
    <property type="entry name" value="GatB_Yqey_C_2"/>
</dbReference>
<dbReference type="InterPro" id="IPR017958">
    <property type="entry name" value="Gln-tRNA_amidoTrfase_suB_CS"/>
</dbReference>
<dbReference type="InterPro" id="IPR014746">
    <property type="entry name" value="Gln_synth/guanido_kin_cat_dom"/>
</dbReference>
<dbReference type="NCBIfam" id="TIGR00133">
    <property type="entry name" value="gatB"/>
    <property type="match status" value="1"/>
</dbReference>
<dbReference type="NCBIfam" id="NF004011">
    <property type="entry name" value="PRK05477.1-1"/>
    <property type="match status" value="1"/>
</dbReference>
<dbReference type="NCBIfam" id="NF004012">
    <property type="entry name" value="PRK05477.1-2"/>
    <property type="match status" value="1"/>
</dbReference>
<dbReference type="NCBIfam" id="NF004014">
    <property type="entry name" value="PRK05477.1-4"/>
    <property type="match status" value="1"/>
</dbReference>
<dbReference type="PANTHER" id="PTHR11659">
    <property type="entry name" value="GLUTAMYL-TRNA GLN AMIDOTRANSFERASE SUBUNIT B MITOCHONDRIAL AND PROKARYOTIC PET112-RELATED"/>
    <property type="match status" value="1"/>
</dbReference>
<dbReference type="PANTHER" id="PTHR11659:SF0">
    <property type="entry name" value="GLUTAMYL-TRNA(GLN) AMIDOTRANSFERASE SUBUNIT B, MITOCHONDRIAL"/>
    <property type="match status" value="1"/>
</dbReference>
<dbReference type="Pfam" id="PF02934">
    <property type="entry name" value="GatB_N"/>
    <property type="match status" value="1"/>
</dbReference>
<dbReference type="Pfam" id="PF02637">
    <property type="entry name" value="GatB_Yqey"/>
    <property type="match status" value="1"/>
</dbReference>
<dbReference type="SMART" id="SM00845">
    <property type="entry name" value="GatB_Yqey"/>
    <property type="match status" value="1"/>
</dbReference>
<dbReference type="SUPFAM" id="SSF89095">
    <property type="entry name" value="GatB/YqeY motif"/>
    <property type="match status" value="1"/>
</dbReference>
<dbReference type="SUPFAM" id="SSF55931">
    <property type="entry name" value="Glutamine synthetase/guanido kinase"/>
    <property type="match status" value="1"/>
</dbReference>
<dbReference type="PROSITE" id="PS01234">
    <property type="entry name" value="GATB"/>
    <property type="match status" value="1"/>
</dbReference>
<evidence type="ECO:0000255" key="1">
    <source>
        <dbReference type="HAMAP-Rule" id="MF_00121"/>
    </source>
</evidence>
<protein>
    <recommendedName>
        <fullName evidence="1">Aspartyl/glutamyl-tRNA(Asn/Gln) amidotransferase subunit B</fullName>
        <shortName evidence="1">Asp/Glu-ADT subunit B</shortName>
        <ecNumber evidence="1">6.3.5.-</ecNumber>
    </recommendedName>
</protein>
<feature type="chain" id="PRO_1000015976" description="Aspartyl/glutamyl-tRNA(Asn/Gln) amidotransferase subunit B">
    <location>
        <begin position="1"/>
        <end position="473"/>
    </location>
</feature>
<comment type="function">
    <text evidence="1">Allows the formation of correctly charged Asn-tRNA(Asn) or Gln-tRNA(Gln) through the transamidation of misacylated Asp-tRNA(Asn) or Glu-tRNA(Gln) in organisms which lack either or both of asparaginyl-tRNA or glutaminyl-tRNA synthetases. The reaction takes place in the presence of glutamine and ATP through an activated phospho-Asp-tRNA(Asn) or phospho-Glu-tRNA(Gln).</text>
</comment>
<comment type="catalytic activity">
    <reaction evidence="1">
        <text>L-glutamyl-tRNA(Gln) + L-glutamine + ATP + H2O = L-glutaminyl-tRNA(Gln) + L-glutamate + ADP + phosphate + H(+)</text>
        <dbReference type="Rhea" id="RHEA:17521"/>
        <dbReference type="Rhea" id="RHEA-COMP:9681"/>
        <dbReference type="Rhea" id="RHEA-COMP:9684"/>
        <dbReference type="ChEBI" id="CHEBI:15377"/>
        <dbReference type="ChEBI" id="CHEBI:15378"/>
        <dbReference type="ChEBI" id="CHEBI:29985"/>
        <dbReference type="ChEBI" id="CHEBI:30616"/>
        <dbReference type="ChEBI" id="CHEBI:43474"/>
        <dbReference type="ChEBI" id="CHEBI:58359"/>
        <dbReference type="ChEBI" id="CHEBI:78520"/>
        <dbReference type="ChEBI" id="CHEBI:78521"/>
        <dbReference type="ChEBI" id="CHEBI:456216"/>
    </reaction>
</comment>
<comment type="catalytic activity">
    <reaction evidence="1">
        <text>L-aspartyl-tRNA(Asn) + L-glutamine + ATP + H2O = L-asparaginyl-tRNA(Asn) + L-glutamate + ADP + phosphate + 2 H(+)</text>
        <dbReference type="Rhea" id="RHEA:14513"/>
        <dbReference type="Rhea" id="RHEA-COMP:9674"/>
        <dbReference type="Rhea" id="RHEA-COMP:9677"/>
        <dbReference type="ChEBI" id="CHEBI:15377"/>
        <dbReference type="ChEBI" id="CHEBI:15378"/>
        <dbReference type="ChEBI" id="CHEBI:29985"/>
        <dbReference type="ChEBI" id="CHEBI:30616"/>
        <dbReference type="ChEBI" id="CHEBI:43474"/>
        <dbReference type="ChEBI" id="CHEBI:58359"/>
        <dbReference type="ChEBI" id="CHEBI:78515"/>
        <dbReference type="ChEBI" id="CHEBI:78516"/>
        <dbReference type="ChEBI" id="CHEBI:456216"/>
    </reaction>
</comment>
<comment type="subunit">
    <text evidence="1">Heterotrimer of A, B and C subunits.</text>
</comment>
<comment type="similarity">
    <text evidence="1">Belongs to the GatB/GatE family. GatB subfamily.</text>
</comment>
<keyword id="KW-0067">ATP-binding</keyword>
<keyword id="KW-0436">Ligase</keyword>
<keyword id="KW-0547">Nucleotide-binding</keyword>
<keyword id="KW-0648">Protein biosynthesis</keyword>
<keyword id="KW-1185">Reference proteome</keyword>
<sequence length="473" mass="52693">MNFETTIGLEVHIELKTHSKIFSPSPVAYGADPNANTNVIDWGYPGVLPTTNKGVVADGIIAALALHATVEQHTHFDRKNYFYPDNPKAYQITQSDKPIGHDGWVEIDVDGVKKKIGIAEMHIEEDAGKNTHERDYSYVDLNRQGTPLIEIVSKPDIASPAEAYAYLEALRQRIQFTGISDVKMEEGSMRVDVNISVRPVGQQKFGTKTELKNLNSFNYVQRGLEYEEKRQQQVLMSGGAVQQETRRFDEKTGETILMRVKAGADDYRYFPEPDLPALNISDDWIKELDAAMPEMPGKRRERYVNELGLTDYDAMVITQTKEMSDFFNATVALKADPKMAANYLQGDVNAYLNDKQVDLQATKLTPEHLAGMINLITDGTISSKMAKKVFKAITEGEDPKAFVEANGLVQLSDPAKLQPIIDDVLSANPQSIEDFNNGKKRAVGFLVGQIMKQTHGQANPQVVNKLLMAALQQ</sequence>